<accession>Q9CWK3</accession>
<accession>Q3TJX5</accession>
<organism>
    <name type="scientific">Mus musculus</name>
    <name type="common">Mouse</name>
    <dbReference type="NCBI Taxonomy" id="10090"/>
    <lineage>
        <taxon>Eukaryota</taxon>
        <taxon>Metazoa</taxon>
        <taxon>Chordata</taxon>
        <taxon>Craniata</taxon>
        <taxon>Vertebrata</taxon>
        <taxon>Euteleostomi</taxon>
        <taxon>Mammalia</taxon>
        <taxon>Eutheria</taxon>
        <taxon>Euarchontoglires</taxon>
        <taxon>Glires</taxon>
        <taxon>Rodentia</taxon>
        <taxon>Myomorpha</taxon>
        <taxon>Muroidea</taxon>
        <taxon>Muridae</taxon>
        <taxon>Murinae</taxon>
        <taxon>Mus</taxon>
        <taxon>Mus</taxon>
    </lineage>
</organism>
<gene>
    <name type="primary">Cd2bp2</name>
</gene>
<name>CD2B2_MOUSE</name>
<keyword id="KW-0007">Acetylation</keyword>
<keyword id="KW-0963">Cytoplasm</keyword>
<keyword id="KW-1017">Isopeptide bond</keyword>
<keyword id="KW-0507">mRNA processing</keyword>
<keyword id="KW-0508">mRNA splicing</keyword>
<keyword id="KW-0539">Nucleus</keyword>
<keyword id="KW-0597">Phosphoprotein</keyword>
<keyword id="KW-1185">Reference proteome</keyword>
<keyword id="KW-0832">Ubl conjugation</keyword>
<reference key="1">
    <citation type="journal article" date="2005" name="Science">
        <title>The transcriptional landscape of the mammalian genome.</title>
        <authorList>
            <person name="Carninci P."/>
            <person name="Kasukawa T."/>
            <person name="Katayama S."/>
            <person name="Gough J."/>
            <person name="Frith M.C."/>
            <person name="Maeda N."/>
            <person name="Oyama R."/>
            <person name="Ravasi T."/>
            <person name="Lenhard B."/>
            <person name="Wells C."/>
            <person name="Kodzius R."/>
            <person name="Shimokawa K."/>
            <person name="Bajic V.B."/>
            <person name="Brenner S.E."/>
            <person name="Batalov S."/>
            <person name="Forrest A.R."/>
            <person name="Zavolan M."/>
            <person name="Davis M.J."/>
            <person name="Wilming L.G."/>
            <person name="Aidinis V."/>
            <person name="Allen J.E."/>
            <person name="Ambesi-Impiombato A."/>
            <person name="Apweiler R."/>
            <person name="Aturaliya R.N."/>
            <person name="Bailey T.L."/>
            <person name="Bansal M."/>
            <person name="Baxter L."/>
            <person name="Beisel K.W."/>
            <person name="Bersano T."/>
            <person name="Bono H."/>
            <person name="Chalk A.M."/>
            <person name="Chiu K.P."/>
            <person name="Choudhary V."/>
            <person name="Christoffels A."/>
            <person name="Clutterbuck D.R."/>
            <person name="Crowe M.L."/>
            <person name="Dalla E."/>
            <person name="Dalrymple B.P."/>
            <person name="de Bono B."/>
            <person name="Della Gatta G."/>
            <person name="di Bernardo D."/>
            <person name="Down T."/>
            <person name="Engstrom P."/>
            <person name="Fagiolini M."/>
            <person name="Faulkner G."/>
            <person name="Fletcher C.F."/>
            <person name="Fukushima T."/>
            <person name="Furuno M."/>
            <person name="Futaki S."/>
            <person name="Gariboldi M."/>
            <person name="Georgii-Hemming P."/>
            <person name="Gingeras T.R."/>
            <person name="Gojobori T."/>
            <person name="Green R.E."/>
            <person name="Gustincich S."/>
            <person name="Harbers M."/>
            <person name="Hayashi Y."/>
            <person name="Hensch T.K."/>
            <person name="Hirokawa N."/>
            <person name="Hill D."/>
            <person name="Huminiecki L."/>
            <person name="Iacono M."/>
            <person name="Ikeo K."/>
            <person name="Iwama A."/>
            <person name="Ishikawa T."/>
            <person name="Jakt M."/>
            <person name="Kanapin A."/>
            <person name="Katoh M."/>
            <person name="Kawasawa Y."/>
            <person name="Kelso J."/>
            <person name="Kitamura H."/>
            <person name="Kitano H."/>
            <person name="Kollias G."/>
            <person name="Krishnan S.P."/>
            <person name="Kruger A."/>
            <person name="Kummerfeld S.K."/>
            <person name="Kurochkin I.V."/>
            <person name="Lareau L.F."/>
            <person name="Lazarevic D."/>
            <person name="Lipovich L."/>
            <person name="Liu J."/>
            <person name="Liuni S."/>
            <person name="McWilliam S."/>
            <person name="Madan Babu M."/>
            <person name="Madera M."/>
            <person name="Marchionni L."/>
            <person name="Matsuda H."/>
            <person name="Matsuzawa S."/>
            <person name="Miki H."/>
            <person name="Mignone F."/>
            <person name="Miyake S."/>
            <person name="Morris K."/>
            <person name="Mottagui-Tabar S."/>
            <person name="Mulder N."/>
            <person name="Nakano N."/>
            <person name="Nakauchi H."/>
            <person name="Ng P."/>
            <person name="Nilsson R."/>
            <person name="Nishiguchi S."/>
            <person name="Nishikawa S."/>
            <person name="Nori F."/>
            <person name="Ohara O."/>
            <person name="Okazaki Y."/>
            <person name="Orlando V."/>
            <person name="Pang K.C."/>
            <person name="Pavan W.J."/>
            <person name="Pavesi G."/>
            <person name="Pesole G."/>
            <person name="Petrovsky N."/>
            <person name="Piazza S."/>
            <person name="Reed J."/>
            <person name="Reid J.F."/>
            <person name="Ring B.Z."/>
            <person name="Ringwald M."/>
            <person name="Rost B."/>
            <person name="Ruan Y."/>
            <person name="Salzberg S.L."/>
            <person name="Sandelin A."/>
            <person name="Schneider C."/>
            <person name="Schoenbach C."/>
            <person name="Sekiguchi K."/>
            <person name="Semple C.A."/>
            <person name="Seno S."/>
            <person name="Sessa L."/>
            <person name="Sheng Y."/>
            <person name="Shibata Y."/>
            <person name="Shimada H."/>
            <person name="Shimada K."/>
            <person name="Silva D."/>
            <person name="Sinclair B."/>
            <person name="Sperling S."/>
            <person name="Stupka E."/>
            <person name="Sugiura K."/>
            <person name="Sultana R."/>
            <person name="Takenaka Y."/>
            <person name="Taki K."/>
            <person name="Tammoja K."/>
            <person name="Tan S.L."/>
            <person name="Tang S."/>
            <person name="Taylor M.S."/>
            <person name="Tegner J."/>
            <person name="Teichmann S.A."/>
            <person name="Ueda H.R."/>
            <person name="van Nimwegen E."/>
            <person name="Verardo R."/>
            <person name="Wei C.L."/>
            <person name="Yagi K."/>
            <person name="Yamanishi H."/>
            <person name="Zabarovsky E."/>
            <person name="Zhu S."/>
            <person name="Zimmer A."/>
            <person name="Hide W."/>
            <person name="Bult C."/>
            <person name="Grimmond S.M."/>
            <person name="Teasdale R.D."/>
            <person name="Liu E.T."/>
            <person name="Brusic V."/>
            <person name="Quackenbush J."/>
            <person name="Wahlestedt C."/>
            <person name="Mattick J.S."/>
            <person name="Hume D.A."/>
            <person name="Kai C."/>
            <person name="Sasaki D."/>
            <person name="Tomaru Y."/>
            <person name="Fukuda S."/>
            <person name="Kanamori-Katayama M."/>
            <person name="Suzuki M."/>
            <person name="Aoki J."/>
            <person name="Arakawa T."/>
            <person name="Iida J."/>
            <person name="Imamura K."/>
            <person name="Itoh M."/>
            <person name="Kato T."/>
            <person name="Kawaji H."/>
            <person name="Kawagashira N."/>
            <person name="Kawashima T."/>
            <person name="Kojima M."/>
            <person name="Kondo S."/>
            <person name="Konno H."/>
            <person name="Nakano K."/>
            <person name="Ninomiya N."/>
            <person name="Nishio T."/>
            <person name="Okada M."/>
            <person name="Plessy C."/>
            <person name="Shibata K."/>
            <person name="Shiraki T."/>
            <person name="Suzuki S."/>
            <person name="Tagami M."/>
            <person name="Waki K."/>
            <person name="Watahiki A."/>
            <person name="Okamura-Oho Y."/>
            <person name="Suzuki H."/>
            <person name="Kawai J."/>
            <person name="Hayashizaki Y."/>
        </authorList>
    </citation>
    <scope>NUCLEOTIDE SEQUENCE [LARGE SCALE MRNA]</scope>
    <source>
        <strain>C57BL/6J</strain>
        <tissue>Embryo</tissue>
        <tissue>Pituitary</tissue>
        <tissue>Testis</tissue>
    </source>
</reference>
<reference key="2">
    <citation type="journal article" date="2004" name="Genome Res.">
        <title>The status, quality, and expansion of the NIH full-length cDNA project: the Mammalian Gene Collection (MGC).</title>
        <authorList>
            <consortium name="The MGC Project Team"/>
        </authorList>
    </citation>
    <scope>NUCLEOTIDE SEQUENCE [LARGE SCALE MRNA]</scope>
</reference>
<reference key="3">
    <citation type="journal article" date="2006" name="Mol. Cell. Proteomics">
        <title>Comprehensive identification of phosphorylation sites in postsynaptic density preparations.</title>
        <authorList>
            <person name="Trinidad J.C."/>
            <person name="Specht C.G."/>
            <person name="Thalhammer A."/>
            <person name="Schoepfer R."/>
            <person name="Burlingame A.L."/>
        </authorList>
    </citation>
    <scope>IDENTIFICATION BY MASS SPECTROMETRY [LARGE SCALE ANALYSIS]</scope>
    <source>
        <tissue>Brain</tissue>
    </source>
</reference>
<reference key="4">
    <citation type="journal article" date="2010" name="Cell">
        <title>A tissue-specific atlas of mouse protein phosphorylation and expression.</title>
        <authorList>
            <person name="Huttlin E.L."/>
            <person name="Jedrychowski M.P."/>
            <person name="Elias J.E."/>
            <person name="Goswami T."/>
            <person name="Rad R."/>
            <person name="Beausoleil S.A."/>
            <person name="Villen J."/>
            <person name="Haas W."/>
            <person name="Sowa M.E."/>
            <person name="Gygi S.P."/>
        </authorList>
    </citation>
    <scope>PHOSPHORYLATION [LARGE SCALE ANALYSIS] AT SER-49</scope>
    <scope>IDENTIFICATION BY MASS SPECTROMETRY [LARGE SCALE ANALYSIS]</scope>
    <source>
        <tissue>Kidney</tissue>
        <tissue>Spleen</tissue>
        <tissue>Testis</tissue>
    </source>
</reference>
<reference key="5">
    <citation type="journal article" date="2013" name="Mol. Cell">
        <title>SIRT5-mediated lysine desuccinylation impacts diverse metabolic pathways.</title>
        <authorList>
            <person name="Park J."/>
            <person name="Chen Y."/>
            <person name="Tishkoff D.X."/>
            <person name="Peng C."/>
            <person name="Tan M."/>
            <person name="Dai L."/>
            <person name="Xie Z."/>
            <person name="Zhang Y."/>
            <person name="Zwaans B.M."/>
            <person name="Skinner M.E."/>
            <person name="Lombard D.B."/>
            <person name="Zhao Y."/>
        </authorList>
    </citation>
    <scope>ACETYLATION [LARGE SCALE ANALYSIS] AT LYS-44</scope>
    <scope>IDENTIFICATION BY MASS SPECTROMETRY [LARGE SCALE ANALYSIS]</scope>
    <source>
        <tissue>Embryonic fibroblast</tissue>
    </source>
</reference>
<proteinExistence type="evidence at protein level"/>
<feature type="chain" id="PRO_0000089438" description="CD2 antigen cytoplasmic tail-binding protein 2">
    <location>
        <begin position="1"/>
        <end position="342"/>
    </location>
</feature>
<feature type="domain" description="GYF" evidence="3">
    <location>
        <begin position="281"/>
        <end position="339"/>
    </location>
</feature>
<feature type="region of interest" description="Disordered" evidence="4">
    <location>
        <begin position="1"/>
        <end position="64"/>
    </location>
</feature>
<feature type="region of interest" description="Disordered" evidence="4">
    <location>
        <begin position="130"/>
        <end position="150"/>
    </location>
</feature>
<feature type="region of interest" description="Disordered" evidence="4">
    <location>
        <begin position="177"/>
        <end position="200"/>
    </location>
</feature>
<feature type="modified residue" description="N6-acetyllysine" evidence="6">
    <location>
        <position position="44"/>
    </location>
</feature>
<feature type="modified residue" description="Phosphoserine" evidence="2">
    <location>
        <position position="46"/>
    </location>
</feature>
<feature type="modified residue" description="Phosphoserine" evidence="5">
    <location>
        <position position="49"/>
    </location>
</feature>
<feature type="modified residue" description="Phosphoserine" evidence="2">
    <location>
        <position position="117"/>
    </location>
</feature>
<feature type="modified residue" description="Phosphoserine" evidence="2">
    <location>
        <position position="196"/>
    </location>
</feature>
<feature type="cross-link" description="Glycyl lysine isopeptide (Lys-Gly) (interchain with G-Cter in SUMO2)" evidence="2">
    <location>
        <position position="26"/>
    </location>
</feature>
<sequence length="342" mass="37694">MPKRKVTFQGVGDEDGEDEISVPKKKLVDPVAAAGGPGSRFKGKHSLDSDEEDDDEEGSSKYDILASEDVEGQEAATLPSEGGVRITPFNLQEEMEEGHFDADGNYFLNQDAQIRDSWLDNIDWVRIKERPPDKHQVSDSEEEDSLGQTPMSAQALLEGLLELLLPRETVAGALRRLGARGGGKGSNSKGTGRPNSPQRLDRLSGLADQMVARGNLGVYQETRERLAMRLKGLGCRAQGSHDPTPPPSLDMFAEEVAEGELETPTPTQREEAESAGDGLMDVMWEYKWENTGDAELYGPFTSAQMQTWVSEGYFPDGVYCRKLDPPGGQFYNSKRIDFELYT</sequence>
<protein>
    <recommendedName>
        <fullName>CD2 antigen cytoplasmic tail-binding protein 2</fullName>
        <shortName>CD2 cytoplasmic domain-binding protein 2</shortName>
        <shortName>CD2 tail-binding protein 2</shortName>
    </recommendedName>
</protein>
<evidence type="ECO:0000250" key="1"/>
<evidence type="ECO:0000250" key="2">
    <source>
        <dbReference type="UniProtKB" id="O95400"/>
    </source>
</evidence>
<evidence type="ECO:0000255" key="3">
    <source>
        <dbReference type="PROSITE-ProRule" id="PRU00101"/>
    </source>
</evidence>
<evidence type="ECO:0000256" key="4">
    <source>
        <dbReference type="SAM" id="MobiDB-lite"/>
    </source>
</evidence>
<evidence type="ECO:0007744" key="5">
    <source>
    </source>
</evidence>
<evidence type="ECO:0007744" key="6">
    <source>
    </source>
</evidence>
<dbReference type="EMBL" id="BC006920">
    <property type="protein sequence ID" value="AAH06920.1"/>
    <property type="molecule type" value="mRNA"/>
</dbReference>
<dbReference type="EMBL" id="AK010582">
    <property type="protein sequence ID" value="BAB27044.1"/>
    <property type="molecule type" value="mRNA"/>
</dbReference>
<dbReference type="EMBL" id="AK030393">
    <property type="protein sequence ID" value="BAC26940.1"/>
    <property type="molecule type" value="mRNA"/>
</dbReference>
<dbReference type="EMBL" id="AK031694">
    <property type="protein sequence ID" value="BAC27518.1"/>
    <property type="molecule type" value="mRNA"/>
</dbReference>
<dbReference type="EMBL" id="AK034689">
    <property type="protein sequence ID" value="BAC28798.1"/>
    <property type="molecule type" value="mRNA"/>
</dbReference>
<dbReference type="EMBL" id="AK167249">
    <property type="protein sequence ID" value="BAE39370.1"/>
    <property type="molecule type" value="mRNA"/>
</dbReference>
<dbReference type="CCDS" id="CCDS21859.1"/>
<dbReference type="RefSeq" id="NP_001272834.1">
    <property type="nucleotide sequence ID" value="NM_001285905.1"/>
</dbReference>
<dbReference type="RefSeq" id="NP_001272835.1">
    <property type="nucleotide sequence ID" value="NM_001285906.1"/>
</dbReference>
<dbReference type="RefSeq" id="NP_001272836.1">
    <property type="nucleotide sequence ID" value="NM_001285907.1"/>
</dbReference>
<dbReference type="RefSeq" id="NP_001344746.1">
    <property type="nucleotide sequence ID" value="NM_001357817.1"/>
</dbReference>
<dbReference type="RefSeq" id="NP_081629.1">
    <property type="nucleotide sequence ID" value="NM_027353.4"/>
</dbReference>
<dbReference type="RefSeq" id="XP_006508260.1">
    <property type="nucleotide sequence ID" value="XM_006508197.2"/>
</dbReference>
<dbReference type="RefSeq" id="XP_006508261.1">
    <property type="nucleotide sequence ID" value="XM_006508198.5"/>
</dbReference>
<dbReference type="RefSeq" id="XP_030098839.1">
    <property type="nucleotide sequence ID" value="XM_030242979.2"/>
</dbReference>
<dbReference type="SMR" id="Q9CWK3"/>
<dbReference type="BioGRID" id="213930">
    <property type="interactions" value="1"/>
</dbReference>
<dbReference type="FunCoup" id="Q9CWK3">
    <property type="interactions" value="4532"/>
</dbReference>
<dbReference type="STRING" id="10090.ENSMUSP00000132963"/>
<dbReference type="GlyGen" id="Q9CWK3">
    <property type="glycosylation" value="1 site"/>
</dbReference>
<dbReference type="iPTMnet" id="Q9CWK3"/>
<dbReference type="PhosphoSitePlus" id="Q9CWK3"/>
<dbReference type="jPOST" id="Q9CWK3"/>
<dbReference type="PaxDb" id="10090-ENSMUSP00000132963"/>
<dbReference type="ProteomicsDB" id="283747"/>
<dbReference type="Pumba" id="Q9CWK3"/>
<dbReference type="Antibodypedia" id="27184">
    <property type="antibodies" value="199 antibodies from 30 providers"/>
</dbReference>
<dbReference type="DNASU" id="70233"/>
<dbReference type="Ensembl" id="ENSMUST00000035771.5">
    <property type="protein sequence ID" value="ENSMUSP00000044790.4"/>
    <property type="gene ID" value="ENSMUSG00000042502.11"/>
</dbReference>
<dbReference type="Ensembl" id="ENSMUST00000166791.8">
    <property type="protein sequence ID" value="ENSMUSP00000132963.2"/>
    <property type="gene ID" value="ENSMUSG00000042502.11"/>
</dbReference>
<dbReference type="Ensembl" id="ENSMUST00000205316.2">
    <property type="protein sequence ID" value="ENSMUSP00000145888.2"/>
    <property type="gene ID" value="ENSMUSG00000042502.11"/>
</dbReference>
<dbReference type="Ensembl" id="ENSMUST00000206026.2">
    <property type="protein sequence ID" value="ENSMUSP00000146167.2"/>
    <property type="gene ID" value="ENSMUSG00000042502.11"/>
</dbReference>
<dbReference type="GeneID" id="70233"/>
<dbReference type="KEGG" id="mmu:70233"/>
<dbReference type="UCSC" id="uc009juj.2">
    <property type="organism name" value="mouse"/>
</dbReference>
<dbReference type="AGR" id="MGI:1917483"/>
<dbReference type="CTD" id="10421"/>
<dbReference type="MGI" id="MGI:1917483">
    <property type="gene designation" value="Cd2bp2"/>
</dbReference>
<dbReference type="VEuPathDB" id="HostDB:ENSMUSG00000042502"/>
<dbReference type="eggNOG" id="KOG2950">
    <property type="taxonomic scope" value="Eukaryota"/>
</dbReference>
<dbReference type="GeneTree" id="ENSGT00390000012483"/>
<dbReference type="HOGENOM" id="CLU_062973_0_0_1"/>
<dbReference type="InParanoid" id="Q9CWK3"/>
<dbReference type="OMA" id="GENTNFY"/>
<dbReference type="OrthoDB" id="331341at2759"/>
<dbReference type="PhylomeDB" id="Q9CWK3"/>
<dbReference type="TreeFam" id="TF313042"/>
<dbReference type="BioGRID-ORCS" id="70233">
    <property type="hits" value="17 hits in 80 CRISPR screens"/>
</dbReference>
<dbReference type="ChiTaRS" id="Cd2bp2">
    <property type="organism name" value="mouse"/>
</dbReference>
<dbReference type="PRO" id="PR:Q9CWK3"/>
<dbReference type="Proteomes" id="UP000000589">
    <property type="component" value="Chromosome 7"/>
</dbReference>
<dbReference type="RNAct" id="Q9CWK3">
    <property type="molecule type" value="protein"/>
</dbReference>
<dbReference type="Bgee" id="ENSMUSG00000042502">
    <property type="expression patterns" value="Expressed in saccule of membranous labyrinth and 251 other cell types or tissues"/>
</dbReference>
<dbReference type="ExpressionAtlas" id="Q9CWK3">
    <property type="expression patterns" value="baseline and differential"/>
</dbReference>
<dbReference type="GO" id="GO:0005829">
    <property type="term" value="C:cytosol"/>
    <property type="evidence" value="ECO:0007669"/>
    <property type="project" value="Ensembl"/>
</dbReference>
<dbReference type="GO" id="GO:0001650">
    <property type="term" value="C:fibrillar center"/>
    <property type="evidence" value="ECO:0007669"/>
    <property type="project" value="Ensembl"/>
</dbReference>
<dbReference type="GO" id="GO:0016607">
    <property type="term" value="C:nuclear speck"/>
    <property type="evidence" value="ECO:0007669"/>
    <property type="project" value="Ensembl"/>
</dbReference>
<dbReference type="GO" id="GO:0005682">
    <property type="term" value="C:U5 snRNP"/>
    <property type="evidence" value="ECO:0007669"/>
    <property type="project" value="Ensembl"/>
</dbReference>
<dbReference type="GO" id="GO:0043021">
    <property type="term" value="F:ribonucleoprotein complex binding"/>
    <property type="evidence" value="ECO:0007669"/>
    <property type="project" value="Ensembl"/>
</dbReference>
<dbReference type="GO" id="GO:0006397">
    <property type="term" value="P:mRNA processing"/>
    <property type="evidence" value="ECO:0007669"/>
    <property type="project" value="UniProtKB-KW"/>
</dbReference>
<dbReference type="GO" id="GO:0008380">
    <property type="term" value="P:RNA splicing"/>
    <property type="evidence" value="ECO:0007669"/>
    <property type="project" value="UniProtKB-KW"/>
</dbReference>
<dbReference type="CDD" id="cd00072">
    <property type="entry name" value="GYF"/>
    <property type="match status" value="1"/>
</dbReference>
<dbReference type="FunFam" id="3.30.1490.40:FF:000002">
    <property type="entry name" value="CD2 antigen cytoplasmic tail-binding protein 2"/>
    <property type="match status" value="1"/>
</dbReference>
<dbReference type="Gene3D" id="3.30.1490.40">
    <property type="match status" value="1"/>
</dbReference>
<dbReference type="InterPro" id="IPR039905">
    <property type="entry name" value="CD2BP2/Lin1"/>
</dbReference>
<dbReference type="InterPro" id="IPR003169">
    <property type="entry name" value="GYF"/>
</dbReference>
<dbReference type="InterPro" id="IPR035445">
    <property type="entry name" value="GYF-like_dom_sf"/>
</dbReference>
<dbReference type="PANTHER" id="PTHR13138:SF3">
    <property type="entry name" value="CD2 ANTIGEN CYTOPLASMIC TAIL-BINDING PROTEIN 2"/>
    <property type="match status" value="1"/>
</dbReference>
<dbReference type="PANTHER" id="PTHR13138">
    <property type="entry name" value="PROTEIN LIN1"/>
    <property type="match status" value="1"/>
</dbReference>
<dbReference type="Pfam" id="PF02213">
    <property type="entry name" value="GYF"/>
    <property type="match status" value="1"/>
</dbReference>
<dbReference type="SMART" id="SM00444">
    <property type="entry name" value="GYF"/>
    <property type="match status" value="1"/>
</dbReference>
<dbReference type="SUPFAM" id="SSF55277">
    <property type="entry name" value="GYF domain"/>
    <property type="match status" value="1"/>
</dbReference>
<dbReference type="PROSITE" id="PS50829">
    <property type="entry name" value="GYF"/>
    <property type="match status" value="1"/>
</dbReference>
<comment type="function">
    <text evidence="1">Involved in pre-mRNA splicing as component of the U5 snRNP complex that is involved in spliceosome assembly.</text>
</comment>
<comment type="subunit">
    <text evidence="1">Component of the U5 snRNP complex composed of the U5 snRNA and at least PRPF6, PRPF8, SNRNP200, EFTUD2, SNRNP40, DDX23, TXNL4A and CD2BP2. Interacts directly with TXNL4A and PRPF6. Interacts (via GYF domain) with CD2 (via Pro-rich sequence in the cytoplasmic domain). Interacts with PQBP1 (By similarity).</text>
</comment>
<comment type="subcellular location">
    <subcellularLocation>
        <location evidence="1">Cytoplasm</location>
    </subcellularLocation>
    <subcellularLocation>
        <location evidence="1">Nucleus</location>
    </subcellularLocation>
    <text evidence="1">Predominantly nuclear.</text>
</comment>